<accession>P97440</accession>
<gene>
    <name type="primary">Slbp</name>
    <name type="synonym">Hbp</name>
</gene>
<protein>
    <recommendedName>
        <fullName>Histone RNA hairpin-binding protein</fullName>
    </recommendedName>
    <alternativeName>
        <fullName>Histone stem-loop-binding protein</fullName>
    </alternativeName>
</protein>
<reference key="1">
    <citation type="journal article" date="1996" name="Genes Dev.">
        <title>The protein that binds the 3' end of histone mRNA: a novel RNA-binding protein required for histone pre-mRNA processing.</title>
        <authorList>
            <person name="Wang Z.-F."/>
            <person name="Whitfield M.L."/>
            <person name="Ingledue T.C. III"/>
            <person name="Dominski Z."/>
            <person name="Marzluff W.F."/>
        </authorList>
    </citation>
    <scope>NUCLEOTIDE SEQUENCE [MRNA]</scope>
    <source>
        <strain>NIH Swiss</strain>
        <tissue>Embryo</tissue>
    </source>
</reference>
<reference key="2">
    <citation type="journal article" date="2008" name="Dev. Biol.">
        <title>Stem-loop binding protein expressed in growing oocytes is required for accumulation of mRNAs encoding histones H3 and H4 and for early embryonic development in the mouse.</title>
        <authorList>
            <person name="Arnold D.R."/>
            <person name="Francon P."/>
            <person name="Zhang J."/>
            <person name="Martin K."/>
            <person name="Clarke H.J."/>
        </authorList>
    </citation>
    <scope>FUNCTION</scope>
    <scope>DISRUPTION PHENOTYPE</scope>
    <scope>SUBCELLULAR LOCATION</scope>
    <scope>TISSUE SPECIFICITY</scope>
</reference>
<reference key="3">
    <citation type="journal article" date="2009" name="Mol. Cell. Biol.">
        <title>Three proteins of the U7-specific Sm ring function as the molecular ruler to determine the site of 3'-end processing in mammalian histone pre-mRNA.</title>
        <authorList>
            <person name="Yang X.-C."/>
            <person name="Torres M.P."/>
            <person name="Marzluff W.F."/>
            <person name="Dominski Z."/>
        </authorList>
    </citation>
    <scope>FUNCTION</scope>
    <scope>IDENTIFICATION IN A HISTONE PRE-MRNA COMPLEX</scope>
    <scope>RNA-BINDING</scope>
    <scope>IDENTIFICATION BY MASS SPECTROMETRY</scope>
</reference>
<reference key="4">
    <citation type="journal article" date="2010" name="Cell">
        <title>A tissue-specific atlas of mouse protein phosphorylation and expression.</title>
        <authorList>
            <person name="Huttlin E.L."/>
            <person name="Jedrychowski M.P."/>
            <person name="Elias J.E."/>
            <person name="Goswami T."/>
            <person name="Rad R."/>
            <person name="Beausoleil S.A."/>
            <person name="Villen J."/>
            <person name="Haas W."/>
            <person name="Sowa M.E."/>
            <person name="Gygi S.P."/>
        </authorList>
    </citation>
    <scope>IDENTIFICATION BY MASS SPECTROMETRY [LARGE SCALE ANALYSIS]</scope>
    <source>
        <tissue>Spleen</tissue>
        <tissue>Testis</tissue>
    </source>
</reference>
<feature type="chain" id="PRO_0000100357" description="Histone RNA hairpin-binding protein">
    <location>
        <begin position="1"/>
        <end position="275"/>
    </location>
</feature>
<feature type="region of interest" description="Disordered" evidence="2">
    <location>
        <begin position="1"/>
        <end position="88"/>
    </location>
</feature>
<feature type="region of interest" description="Disordered" evidence="2">
    <location>
        <begin position="103"/>
        <end position="133"/>
    </location>
</feature>
<feature type="region of interest" description="RNA-binding" evidence="1">
    <location>
        <begin position="129"/>
        <end position="198"/>
    </location>
</feature>
<feature type="region of interest" description="Disordered" evidence="2">
    <location>
        <begin position="219"/>
        <end position="240"/>
    </location>
</feature>
<feature type="short sequence motif" description="Nuclear localization signal NLS1" evidence="1">
    <location>
        <begin position="31"/>
        <end position="34"/>
    </location>
</feature>
<feature type="short sequence motif" description="Nuclear localization signal NLS2" evidence="1">
    <location>
        <begin position="96"/>
        <end position="99"/>
    </location>
</feature>
<feature type="compositionally biased region" description="Low complexity" evidence="2">
    <location>
        <begin position="111"/>
        <end position="123"/>
    </location>
</feature>
<feature type="compositionally biased region" description="Low complexity" evidence="2">
    <location>
        <begin position="223"/>
        <end position="233"/>
    </location>
</feature>
<feature type="modified residue" description="Phosphoserine" evidence="1">
    <location>
        <position position="20"/>
    </location>
</feature>
<feature type="modified residue" description="Phosphoserine" evidence="1">
    <location>
        <position position="23"/>
    </location>
</feature>
<feature type="modified residue" description="Phosphoserine" evidence="1">
    <location>
        <position position="59"/>
    </location>
</feature>
<feature type="modified residue" description="Phosphothreonine; by CK2" evidence="1">
    <location>
        <position position="61"/>
    </location>
</feature>
<feature type="modified residue" description="Phosphothreonine; by CDK1" evidence="1">
    <location>
        <position position="62"/>
    </location>
</feature>
<feature type="modified residue" description="Phosphothreonine" evidence="1">
    <location>
        <position position="171"/>
    </location>
</feature>
<feature type="modified residue" description="Phosphoserine" evidence="1">
    <location>
        <position position="182"/>
    </location>
</feature>
<feature type="cross-link" description="Glycyl lysine isopeptide (Lys-Gly) (interchain with G-Cter in SUMO2)" evidence="1">
    <location>
        <position position="98"/>
    </location>
</feature>
<proteinExistence type="evidence at protein level"/>
<dbReference type="EMBL" id="U75680">
    <property type="protein sequence ID" value="AAC53530.1"/>
    <property type="molecule type" value="mRNA"/>
</dbReference>
<dbReference type="CCDS" id="CCDS19205.1"/>
<dbReference type="RefSeq" id="NP_033219.1">
    <property type="nucleotide sequence ID" value="NM_009193.2"/>
</dbReference>
<dbReference type="BMRB" id="P97440"/>
<dbReference type="SMR" id="P97440"/>
<dbReference type="ComplexPortal" id="CPX-1312">
    <property type="entry name" value="SLBP-SLIP1 complex"/>
</dbReference>
<dbReference type="CORUM" id="P97440"/>
<dbReference type="FunCoup" id="P97440">
    <property type="interactions" value="4211"/>
</dbReference>
<dbReference type="IntAct" id="P97440">
    <property type="interactions" value="1"/>
</dbReference>
<dbReference type="MINT" id="P97440"/>
<dbReference type="STRING" id="10090.ENSMUSP00000062930"/>
<dbReference type="iPTMnet" id="P97440"/>
<dbReference type="PhosphoSitePlus" id="P97440"/>
<dbReference type="jPOST" id="P97440"/>
<dbReference type="PaxDb" id="10090-ENSMUSP00000062930"/>
<dbReference type="PeptideAtlas" id="P97440"/>
<dbReference type="ProteomicsDB" id="261419"/>
<dbReference type="Pumba" id="P97440"/>
<dbReference type="Antibodypedia" id="8450">
    <property type="antibodies" value="84 antibodies from 24 providers"/>
</dbReference>
<dbReference type="DNASU" id="20492"/>
<dbReference type="Ensembl" id="ENSMUST00000057551.14">
    <property type="protein sequence ID" value="ENSMUSP00000062930.8"/>
    <property type="gene ID" value="ENSMUSG00000004642.14"/>
</dbReference>
<dbReference type="GeneID" id="20492"/>
<dbReference type="KEGG" id="mmu:20492"/>
<dbReference type="UCSC" id="uc008xaw.2">
    <property type="organism name" value="mouse"/>
</dbReference>
<dbReference type="AGR" id="MGI:108402"/>
<dbReference type="CTD" id="7884"/>
<dbReference type="MGI" id="MGI:108402">
    <property type="gene designation" value="Slbp"/>
</dbReference>
<dbReference type="VEuPathDB" id="HostDB:ENSMUSG00000004642"/>
<dbReference type="eggNOG" id="KOG3934">
    <property type="taxonomic scope" value="Eukaryota"/>
</dbReference>
<dbReference type="GeneTree" id="ENSGT00390000008738"/>
<dbReference type="HOGENOM" id="CLU_093199_0_0_1"/>
<dbReference type="InParanoid" id="P97440"/>
<dbReference type="OMA" id="HPPRWAQ"/>
<dbReference type="OrthoDB" id="265795at2759"/>
<dbReference type="PhylomeDB" id="P97440"/>
<dbReference type="TreeFam" id="TF316521"/>
<dbReference type="Reactome" id="R-MMU-159230">
    <property type="pathway name" value="Transport of the SLBP Dependant Mature mRNA"/>
</dbReference>
<dbReference type="Reactome" id="R-MMU-73856">
    <property type="pathway name" value="RNA Polymerase II Transcription Termination"/>
</dbReference>
<dbReference type="Reactome" id="R-MMU-77588">
    <property type="pathway name" value="SLBP Dependent Processing of Replication-Dependent Histone Pre-mRNAs"/>
</dbReference>
<dbReference type="BioGRID-ORCS" id="20492">
    <property type="hits" value="13 hits in 81 CRISPR screens"/>
</dbReference>
<dbReference type="ChiTaRS" id="Slbp">
    <property type="organism name" value="mouse"/>
</dbReference>
<dbReference type="PRO" id="PR:P97440"/>
<dbReference type="Proteomes" id="UP000000589">
    <property type="component" value="Chromosome 5"/>
</dbReference>
<dbReference type="RNAct" id="P97440">
    <property type="molecule type" value="protein"/>
</dbReference>
<dbReference type="Bgee" id="ENSMUSG00000004642">
    <property type="expression patterns" value="Expressed in animal zygote and 147 other cell types or tissues"/>
</dbReference>
<dbReference type="ExpressionAtlas" id="P97440">
    <property type="expression patterns" value="baseline and differential"/>
</dbReference>
<dbReference type="GO" id="GO:0005737">
    <property type="term" value="C:cytoplasm"/>
    <property type="evidence" value="ECO:0000314"/>
    <property type="project" value="MGI"/>
</dbReference>
<dbReference type="GO" id="GO:0005829">
    <property type="term" value="C:cytosol"/>
    <property type="evidence" value="ECO:0007669"/>
    <property type="project" value="Ensembl"/>
</dbReference>
<dbReference type="GO" id="GO:0062073">
    <property type="term" value="C:histone mRNA stem-loop binding complex"/>
    <property type="evidence" value="ECO:0000266"/>
    <property type="project" value="ComplexPortal"/>
</dbReference>
<dbReference type="GO" id="GO:0071204">
    <property type="term" value="C:histone pre-mRNA 3'end processing complex"/>
    <property type="evidence" value="ECO:0000314"/>
    <property type="project" value="UniProtKB"/>
</dbReference>
<dbReference type="GO" id="GO:0005730">
    <property type="term" value="C:nucleolus"/>
    <property type="evidence" value="ECO:0007669"/>
    <property type="project" value="Ensembl"/>
</dbReference>
<dbReference type="GO" id="GO:0005654">
    <property type="term" value="C:nucleoplasm"/>
    <property type="evidence" value="ECO:0007669"/>
    <property type="project" value="Ensembl"/>
</dbReference>
<dbReference type="GO" id="GO:0005634">
    <property type="term" value="C:nucleus"/>
    <property type="evidence" value="ECO:0000314"/>
    <property type="project" value="MGI"/>
</dbReference>
<dbReference type="GO" id="GO:1990904">
    <property type="term" value="C:ribonucleoprotein complex"/>
    <property type="evidence" value="ECO:0000314"/>
    <property type="project" value="MGI"/>
</dbReference>
<dbReference type="GO" id="GO:0071207">
    <property type="term" value="F:histone pre-mRNA stem-loop binding"/>
    <property type="evidence" value="ECO:0000314"/>
    <property type="project" value="UniProtKB"/>
</dbReference>
<dbReference type="GO" id="GO:0042802">
    <property type="term" value="F:identical protein binding"/>
    <property type="evidence" value="ECO:0007669"/>
    <property type="project" value="Ensembl"/>
</dbReference>
<dbReference type="GO" id="GO:0003729">
    <property type="term" value="F:mRNA binding"/>
    <property type="evidence" value="ECO:0000314"/>
    <property type="project" value="MGI"/>
</dbReference>
<dbReference type="GO" id="GO:0002191">
    <property type="term" value="P:cap-dependent translational initiation"/>
    <property type="evidence" value="ECO:0000266"/>
    <property type="project" value="ComplexPortal"/>
</dbReference>
<dbReference type="GO" id="GO:0006398">
    <property type="term" value="P:mRNA 3'-end processing by stem-loop binding and cleavage"/>
    <property type="evidence" value="ECO:0000314"/>
    <property type="project" value="UniProtKB"/>
</dbReference>
<dbReference type="GO" id="GO:0051028">
    <property type="term" value="P:mRNA transport"/>
    <property type="evidence" value="ECO:0000250"/>
    <property type="project" value="UniProtKB"/>
</dbReference>
<dbReference type="FunFam" id="1.10.8.1120:FF:000001">
    <property type="entry name" value="Histone RNA hairpin-binding protein-like"/>
    <property type="match status" value="1"/>
</dbReference>
<dbReference type="Gene3D" id="1.10.8.1120">
    <property type="entry name" value="Histone RNA hairpin-binding protein RNA-binding domain"/>
    <property type="match status" value="1"/>
</dbReference>
<dbReference type="InterPro" id="IPR026502">
    <property type="entry name" value="SLBP1/SLBP2"/>
</dbReference>
<dbReference type="InterPro" id="IPR029344">
    <property type="entry name" value="SLBP_RNA_bind"/>
</dbReference>
<dbReference type="InterPro" id="IPR038294">
    <property type="entry name" value="SLBP_RNA_bind_sf"/>
</dbReference>
<dbReference type="PANTHER" id="PTHR17408">
    <property type="entry name" value="HISTONE RNA HAIRPIN-BINDING PROTEIN"/>
    <property type="match status" value="1"/>
</dbReference>
<dbReference type="PANTHER" id="PTHR17408:SF7">
    <property type="entry name" value="HISTONE RNA HAIRPIN-BINDING PROTEIN"/>
    <property type="match status" value="1"/>
</dbReference>
<dbReference type="Pfam" id="PF15247">
    <property type="entry name" value="SLBP_RNA_bind"/>
    <property type="match status" value="1"/>
</dbReference>
<comment type="function">
    <text evidence="1 3 4">RNA-binding protein involved in the histone pre-mRNA processing (PubMed:18036581). Binds the stem-loop structure of replication-dependent histone pre-mRNAs and contributes to efficient 3'-end processing by stabilizing the complex between histone pre-mRNA and U7 small nuclear ribonucleoprotein (snRNP), via the histone downstream element (HDE) (PubMed:18036581). Plays an important role in targeting mature histone mRNA from the nucleus to the cytoplasm and to the translation machinery (By similarity). Stabilizes mature histone mRNA and could be involved in cell-cycle regulation of histone gene expression (By similarity). Involved in the mechanism by which growing oocytes accumulate histone proteins that support early embryogenesis (PubMed:18036581). Binds to the 5' side of the stem-loop structure of histone pre-mRNAs (PubMed:19470752).</text>
</comment>
<comment type="subunit">
    <text evidence="1 4">Monomer. SLBP/pre-mRNA complex interacts with ZNF473 (By similarity). Interacts with the Importin alpha/Importin beta receptor, LSM1, MIF4GD, TNPO3 and UPF1 (By similarity). Interaction with LSM1 occurs when histone mRNA is being rapidly degraded during the S phase (By similarity). Found in a ternary complex with ERI1 and the stem-loop structure of the 3' end of histone mRNA. Associates with polyribosomes (By similarity). Identified in a histone pre-mRNA complex, at least composed of ERI1, LSM11, SLBP, SNRPB, SYNCRIP and YBX1 (PubMed:19470752). Binds in a cooperative manner with ERI1 to the mature 3'-end of histone mRNAs (PubMed:19470752).</text>
</comment>
<comment type="subcellular location">
    <subcellularLocation>
        <location evidence="3">Cytoplasm</location>
    </subcellularLocation>
    <subcellularLocation>
        <location evidence="3">Nucleus</location>
    </subcellularLocation>
    <text evidence="1">Localizes predominantly in the nucleus at the G1/G2 phases and the beginning of S phase. Through the S phase, partially redistributes to the cytoplasm. Binding to histone mRNA is necessary for cytoplasmic localization. Shuttles between the nucleus and the cytoplasm. Imported in the nucleus by the Importin alpha/Importin beta receptor (By similarity). Polyribosome-associated.</text>
</comment>
<comment type="tissue specificity">
    <text evidence="3">Widely expressed. Expressed in growing primary but not non-growing oocytes, within the primordial follicles. Also detected in fully-grown oocytes in antral follicles (at protein level).</text>
</comment>
<comment type="domain">
    <text evidence="1">Amino acids 31-34, 96-99 and 246-249 are necessary for interaction with the Importin alpha/Importin beta receptor. The first 18 amino acids, amino acids 69-76 and 179-182 are necessary for interaction with TNPO3. Amino acids 31-34, 96-99 and 246-249 are necessary for nuclear localization (By similarity).</text>
</comment>
<comment type="PTM">
    <text evidence="1">Phosphorylated on Thr-61 and Thr-62 in the S-phase. Phosphorylation of Thr-62 by CDK1 primes phosphorylation of Thr-61 by CK2. Phosphorylation of Thr-62 is required for its degradation at the end of the S phase. Its degradation is not required for histone mRNA degradation at the end of the S phase. All the phosphorylated forms detected are present in the cytoplasm. Both unphosphorylated and phosphorylated forms bind the stem-loop structure of histone mRNAs. Phosphorylation at Thr-171 increases affinity for histone mRNAs (By similarity).</text>
</comment>
<comment type="PTM">
    <text evidence="1">Ubiquitinated by the CRL2(FEM1A), CRL2(FEM1B) and CRL2(FEM1C) complexes, leading to its degradation.</text>
</comment>
<comment type="disruption phenotype">
    <text evidence="3">Females show no impaired oogenesis but display a defect in the formation of primordial follicles leading to infertility. Most embryos arrested at the 2-cell stage and fail to complete the second round of DNA replication due to an insufficient supply of histone H3 and H4. Accumulation of histone H2A and H2B is not affected.</text>
</comment>
<comment type="similarity">
    <text evidence="5">Belongs to the SLBP family.</text>
</comment>
<evidence type="ECO:0000250" key="1">
    <source>
        <dbReference type="UniProtKB" id="Q14493"/>
    </source>
</evidence>
<evidence type="ECO:0000256" key="2">
    <source>
        <dbReference type="SAM" id="MobiDB-lite"/>
    </source>
</evidence>
<evidence type="ECO:0000269" key="3">
    <source>
    </source>
</evidence>
<evidence type="ECO:0000269" key="4">
    <source>
    </source>
</evidence>
<evidence type="ECO:0000305" key="5"/>
<sequence length="275" mass="31603">MACRPRSPPGYGSRRDGGASPRSPARWSLGRKRRADGRDRKPEDSEEGELQTADHRPESFTTPEGHKPRSRCSDWASAVEEDEMRTRVNKEIARYKRKLLINDFGRERKSSSGSSDSKESMSSVPADVETDESVLMRRQKQINYGKNTIAYDRYIKEVPRHLRQPGIHPRTPNKFKKYSRRSWDQQIKLWKVALHFWDPPAEEGCDLQEIQPVDLGEMETEFTESSSESQTSSQDNFDVYAGTPTKVRHVDCQVEDEFDLEACLTEPLKDFSAMS</sequence>
<name>SLBP_MOUSE</name>
<organism>
    <name type="scientific">Mus musculus</name>
    <name type="common">Mouse</name>
    <dbReference type="NCBI Taxonomy" id="10090"/>
    <lineage>
        <taxon>Eukaryota</taxon>
        <taxon>Metazoa</taxon>
        <taxon>Chordata</taxon>
        <taxon>Craniata</taxon>
        <taxon>Vertebrata</taxon>
        <taxon>Euteleostomi</taxon>
        <taxon>Mammalia</taxon>
        <taxon>Eutheria</taxon>
        <taxon>Euarchontoglires</taxon>
        <taxon>Glires</taxon>
        <taxon>Rodentia</taxon>
        <taxon>Myomorpha</taxon>
        <taxon>Muroidea</taxon>
        <taxon>Muridae</taxon>
        <taxon>Murinae</taxon>
        <taxon>Mus</taxon>
        <taxon>Mus</taxon>
    </lineage>
</organism>
<keyword id="KW-0963">Cytoplasm</keyword>
<keyword id="KW-1017">Isopeptide bond</keyword>
<keyword id="KW-0507">mRNA processing</keyword>
<keyword id="KW-0539">Nucleus</keyword>
<keyword id="KW-0597">Phosphoprotein</keyword>
<keyword id="KW-1185">Reference proteome</keyword>
<keyword id="KW-0687">Ribonucleoprotein</keyword>
<keyword id="KW-0694">RNA-binding</keyword>
<keyword id="KW-0832">Ubl conjugation</keyword>